<proteinExistence type="evidence at protein level"/>
<dbReference type="EC" id="1.-.-.-"/>
<dbReference type="EMBL" id="AL123456">
    <property type="protein sequence ID" value="CCP43693.1"/>
    <property type="molecule type" value="Genomic_DNA"/>
</dbReference>
<dbReference type="PIR" id="G70715">
    <property type="entry name" value="G70715"/>
</dbReference>
<dbReference type="RefSeq" id="NP_215460.1">
    <property type="nucleotide sequence ID" value="NC_000962.3"/>
</dbReference>
<dbReference type="RefSeq" id="WP_003898658.1">
    <property type="nucleotide sequence ID" value="NC_000962.3"/>
</dbReference>
<dbReference type="SMR" id="P9WGR7"/>
<dbReference type="STRING" id="83332.Rv0945"/>
<dbReference type="PaxDb" id="83332-Rv0945"/>
<dbReference type="DNASU" id="885629"/>
<dbReference type="GeneID" id="885629"/>
<dbReference type="KEGG" id="mtu:Rv0945"/>
<dbReference type="KEGG" id="mtv:RVBD_0945"/>
<dbReference type="PATRIC" id="fig|83332.111.peg.1046"/>
<dbReference type="TubercuList" id="Rv0945"/>
<dbReference type="eggNOG" id="COG4221">
    <property type="taxonomic scope" value="Bacteria"/>
</dbReference>
<dbReference type="InParanoid" id="P9WGR7"/>
<dbReference type="OrthoDB" id="9797538at2"/>
<dbReference type="PhylomeDB" id="P9WGR7"/>
<dbReference type="Proteomes" id="UP000001584">
    <property type="component" value="Chromosome"/>
</dbReference>
<dbReference type="GO" id="GO:0016020">
    <property type="term" value="C:membrane"/>
    <property type="evidence" value="ECO:0000318"/>
    <property type="project" value="GO_Central"/>
</dbReference>
<dbReference type="GO" id="GO:0016491">
    <property type="term" value="F:oxidoreductase activity"/>
    <property type="evidence" value="ECO:0007669"/>
    <property type="project" value="UniProtKB-KW"/>
</dbReference>
<dbReference type="CDD" id="cd05350">
    <property type="entry name" value="SDR_c6"/>
    <property type="match status" value="1"/>
</dbReference>
<dbReference type="Gene3D" id="3.40.50.720">
    <property type="entry name" value="NAD(P)-binding Rossmann-like Domain"/>
    <property type="match status" value="1"/>
</dbReference>
<dbReference type="InterPro" id="IPR036291">
    <property type="entry name" value="NAD(P)-bd_dom_sf"/>
</dbReference>
<dbReference type="InterPro" id="IPR020904">
    <property type="entry name" value="Sc_DH/Rdtase_CS"/>
</dbReference>
<dbReference type="InterPro" id="IPR002347">
    <property type="entry name" value="SDR_fam"/>
</dbReference>
<dbReference type="NCBIfam" id="NF006099">
    <property type="entry name" value="PRK08251.1"/>
    <property type="match status" value="1"/>
</dbReference>
<dbReference type="PANTHER" id="PTHR44196">
    <property type="entry name" value="DEHYDROGENASE/REDUCTASE SDR FAMILY MEMBER 7B"/>
    <property type="match status" value="1"/>
</dbReference>
<dbReference type="PANTHER" id="PTHR44196:SF1">
    <property type="entry name" value="DEHYDROGENASE_REDUCTASE SDR FAMILY MEMBER 7B"/>
    <property type="match status" value="1"/>
</dbReference>
<dbReference type="Pfam" id="PF00106">
    <property type="entry name" value="adh_short"/>
    <property type="match status" value="1"/>
</dbReference>
<dbReference type="PRINTS" id="PR00081">
    <property type="entry name" value="GDHRDH"/>
</dbReference>
<dbReference type="PRINTS" id="PR00080">
    <property type="entry name" value="SDRFAMILY"/>
</dbReference>
<dbReference type="SUPFAM" id="SSF51735">
    <property type="entry name" value="NAD(P)-binding Rossmann-fold domains"/>
    <property type="match status" value="1"/>
</dbReference>
<dbReference type="PROSITE" id="PS00061">
    <property type="entry name" value="ADH_SHORT"/>
    <property type="match status" value="1"/>
</dbReference>
<gene>
    <name type="ordered locus">Rv0945</name>
    <name type="ORF">MTCY10D7.29c</name>
</gene>
<sequence>MLTGVTRQKILITGASSGLGAGMARSFAAQGRDLALCARRTDRLTELKAELSQRYPDIKIAVAELDVNDHERVPKVFAELSDEIGGIDRVIVNAGIGKGARLGSGKLWANKATIETNLVAALVQIETALDMFNQRGSGHLVLISSVLGVKGVPGVKAAYAASKAGVRSLGESLRAEYAQRPIRVTVLEPGYIESEMTAKSASTMLMVDNATGVKALVAAIEREPGRAAVPWWPWAPLVRLMWVLPPRLTRRFA</sequence>
<organism>
    <name type="scientific">Mycobacterium tuberculosis (strain ATCC 25618 / H37Rv)</name>
    <dbReference type="NCBI Taxonomy" id="83332"/>
    <lineage>
        <taxon>Bacteria</taxon>
        <taxon>Bacillati</taxon>
        <taxon>Actinomycetota</taxon>
        <taxon>Actinomycetes</taxon>
        <taxon>Mycobacteriales</taxon>
        <taxon>Mycobacteriaceae</taxon>
        <taxon>Mycobacterium</taxon>
        <taxon>Mycobacterium tuberculosis complex</taxon>
    </lineage>
</organism>
<keyword id="KW-0560">Oxidoreductase</keyword>
<keyword id="KW-1185">Reference proteome</keyword>
<name>Y945_MYCTU</name>
<evidence type="ECO:0000250" key="1"/>
<evidence type="ECO:0000255" key="2">
    <source>
        <dbReference type="PROSITE-ProRule" id="PRU10001"/>
    </source>
</evidence>
<evidence type="ECO:0000305" key="3"/>
<protein>
    <recommendedName>
        <fullName>Uncharacterized oxidoreductase Rv0945</fullName>
        <ecNumber>1.-.-.-</ecNumber>
    </recommendedName>
</protein>
<comment type="similarity">
    <text evidence="3">Belongs to the short-chain dehydrogenases/reductases (SDR) family.</text>
</comment>
<feature type="chain" id="PRO_0000054862" description="Uncharacterized oxidoreductase Rv0945">
    <location>
        <begin position="1"/>
        <end position="253"/>
    </location>
</feature>
<feature type="active site" description="Proton acceptor" evidence="2">
    <location>
        <position position="159"/>
    </location>
</feature>
<feature type="binding site" evidence="1">
    <location>
        <position position="145"/>
    </location>
    <ligand>
        <name>substrate</name>
    </ligand>
</feature>
<reference key="1">
    <citation type="journal article" date="1998" name="Nature">
        <title>Deciphering the biology of Mycobacterium tuberculosis from the complete genome sequence.</title>
        <authorList>
            <person name="Cole S.T."/>
            <person name="Brosch R."/>
            <person name="Parkhill J."/>
            <person name="Garnier T."/>
            <person name="Churcher C.M."/>
            <person name="Harris D.E."/>
            <person name="Gordon S.V."/>
            <person name="Eiglmeier K."/>
            <person name="Gas S."/>
            <person name="Barry C.E. III"/>
            <person name="Tekaia F."/>
            <person name="Badcock K."/>
            <person name="Basham D."/>
            <person name="Brown D."/>
            <person name="Chillingworth T."/>
            <person name="Connor R."/>
            <person name="Davies R.M."/>
            <person name="Devlin K."/>
            <person name="Feltwell T."/>
            <person name="Gentles S."/>
            <person name="Hamlin N."/>
            <person name="Holroyd S."/>
            <person name="Hornsby T."/>
            <person name="Jagels K."/>
            <person name="Krogh A."/>
            <person name="McLean J."/>
            <person name="Moule S."/>
            <person name="Murphy L.D."/>
            <person name="Oliver S."/>
            <person name="Osborne J."/>
            <person name="Quail M.A."/>
            <person name="Rajandream M.A."/>
            <person name="Rogers J."/>
            <person name="Rutter S."/>
            <person name="Seeger K."/>
            <person name="Skelton S."/>
            <person name="Squares S."/>
            <person name="Squares R."/>
            <person name="Sulston J.E."/>
            <person name="Taylor K."/>
            <person name="Whitehead S."/>
            <person name="Barrell B.G."/>
        </authorList>
    </citation>
    <scope>NUCLEOTIDE SEQUENCE [LARGE SCALE GENOMIC DNA]</scope>
    <source>
        <strain>ATCC 25618 / H37Rv</strain>
    </source>
</reference>
<reference key="2">
    <citation type="journal article" date="2011" name="Mol. Cell. Proteomics">
        <title>Proteogenomic analysis of Mycobacterium tuberculosis by high resolution mass spectrometry.</title>
        <authorList>
            <person name="Kelkar D.S."/>
            <person name="Kumar D."/>
            <person name="Kumar P."/>
            <person name="Balakrishnan L."/>
            <person name="Muthusamy B."/>
            <person name="Yadav A.K."/>
            <person name="Shrivastava P."/>
            <person name="Marimuthu A."/>
            <person name="Anand S."/>
            <person name="Sundaram H."/>
            <person name="Kingsbury R."/>
            <person name="Harsha H.C."/>
            <person name="Nair B."/>
            <person name="Prasad T.S."/>
            <person name="Chauhan D.S."/>
            <person name="Katoch K."/>
            <person name="Katoch V.M."/>
            <person name="Kumar P."/>
            <person name="Chaerkady R."/>
            <person name="Ramachandran S."/>
            <person name="Dash D."/>
            <person name="Pandey A."/>
        </authorList>
    </citation>
    <scope>IDENTIFICATION BY MASS SPECTROMETRY [LARGE SCALE ANALYSIS]</scope>
    <source>
        <strain>ATCC 25618 / H37Rv</strain>
    </source>
</reference>
<accession>P9WGR7</accession>
<accession>L0T7Z5</accession>
<accession>P71564</accession>